<gene>
    <name type="primary">KLHL29</name>
    <name type="synonym">KBTBD9</name>
    <name type="synonym">KIAA1921</name>
</gene>
<organism>
    <name type="scientific">Homo sapiens</name>
    <name type="common">Human</name>
    <dbReference type="NCBI Taxonomy" id="9606"/>
    <lineage>
        <taxon>Eukaryota</taxon>
        <taxon>Metazoa</taxon>
        <taxon>Chordata</taxon>
        <taxon>Craniata</taxon>
        <taxon>Vertebrata</taxon>
        <taxon>Euteleostomi</taxon>
        <taxon>Mammalia</taxon>
        <taxon>Eutheria</taxon>
        <taxon>Euarchontoglires</taxon>
        <taxon>Primates</taxon>
        <taxon>Haplorrhini</taxon>
        <taxon>Catarrhini</taxon>
        <taxon>Hominidae</taxon>
        <taxon>Homo</taxon>
    </lineage>
</organism>
<accession>Q96CT2</accession>
<accession>Q8N388</accession>
<accession>Q96BF0</accession>
<accession>Q96PW7</accession>
<name>KLH29_HUMAN</name>
<keyword id="KW-0025">Alternative splicing</keyword>
<keyword id="KW-0880">Kelch repeat</keyword>
<keyword id="KW-1267">Proteomics identification</keyword>
<keyword id="KW-1185">Reference proteome</keyword>
<keyword id="KW-0677">Repeat</keyword>
<evidence type="ECO:0000255" key="1">
    <source>
        <dbReference type="PROSITE-ProRule" id="PRU00037"/>
    </source>
</evidence>
<evidence type="ECO:0000256" key="2">
    <source>
        <dbReference type="SAM" id="MobiDB-lite"/>
    </source>
</evidence>
<evidence type="ECO:0000303" key="3">
    <source>
    </source>
</evidence>
<evidence type="ECO:0000303" key="4">
    <source>
    </source>
</evidence>
<evidence type="ECO:0000305" key="5"/>
<protein>
    <recommendedName>
        <fullName>Kelch-like protein 29</fullName>
    </recommendedName>
    <alternativeName>
        <fullName>Kelch repeat and BTB domain-containing protein 9</fullName>
    </alternativeName>
</protein>
<dbReference type="EMBL" id="AL834515">
    <property type="protein sequence ID" value="CAD39171.2"/>
    <property type="status" value="ALT_INIT"/>
    <property type="molecule type" value="mRNA"/>
</dbReference>
<dbReference type="EMBL" id="BC013982">
    <property type="protein sequence ID" value="AAH13982.1"/>
    <property type="status" value="ALT_INIT"/>
    <property type="molecule type" value="mRNA"/>
</dbReference>
<dbReference type="EMBL" id="BC015667">
    <property type="protein sequence ID" value="AAH15667.1"/>
    <property type="status" value="ALT_INIT"/>
    <property type="molecule type" value="mRNA"/>
</dbReference>
<dbReference type="EMBL" id="AB067508">
    <property type="protein sequence ID" value="BAB67814.1"/>
    <property type="status" value="ALT_SEQ"/>
    <property type="molecule type" value="mRNA"/>
</dbReference>
<dbReference type="CCDS" id="CCDS54335.1">
    <molecule id="Q96CT2-1"/>
</dbReference>
<dbReference type="RefSeq" id="NP_443152.1">
    <molecule id="Q96CT2-1"/>
    <property type="nucleotide sequence ID" value="NM_052920.2"/>
</dbReference>
<dbReference type="RefSeq" id="XP_006711992.1">
    <molecule id="Q96CT2-1"/>
    <property type="nucleotide sequence ID" value="XM_006711929.4"/>
</dbReference>
<dbReference type="RefSeq" id="XP_016858753.1">
    <property type="nucleotide sequence ID" value="XM_017003264.1"/>
</dbReference>
<dbReference type="RefSeq" id="XP_054196332.1">
    <molecule id="Q96CT2-1"/>
    <property type="nucleotide sequence ID" value="XM_054340357.1"/>
</dbReference>
<dbReference type="RefSeq" id="XP_054196333.1">
    <molecule id="Q96CT2-1"/>
    <property type="nucleotide sequence ID" value="XM_054340358.1"/>
</dbReference>
<dbReference type="SMR" id="Q96CT2"/>
<dbReference type="BioGRID" id="125369">
    <property type="interactions" value="25"/>
</dbReference>
<dbReference type="ComplexPortal" id="CPX-8147">
    <property type="entry name" value="CRL3 E3 ubiquitin ligase complex, KLHL29 variant"/>
</dbReference>
<dbReference type="FunCoup" id="Q96CT2">
    <property type="interactions" value="337"/>
</dbReference>
<dbReference type="IntAct" id="Q96CT2">
    <property type="interactions" value="14"/>
</dbReference>
<dbReference type="STRING" id="9606.ENSP00000420659"/>
<dbReference type="GlyGen" id="Q96CT2">
    <property type="glycosylation" value="4 sites, 1 O-linked glycan (1 site)"/>
</dbReference>
<dbReference type="iPTMnet" id="Q96CT2"/>
<dbReference type="PhosphoSitePlus" id="Q96CT2"/>
<dbReference type="BioMuta" id="KLHL29"/>
<dbReference type="DMDM" id="47605917"/>
<dbReference type="jPOST" id="Q96CT2"/>
<dbReference type="MassIVE" id="Q96CT2"/>
<dbReference type="PaxDb" id="9606-ENSP00000420659"/>
<dbReference type="PeptideAtlas" id="Q96CT2"/>
<dbReference type="ProteomicsDB" id="76219">
    <molecule id="Q96CT2-1"/>
</dbReference>
<dbReference type="ProteomicsDB" id="76220">
    <molecule id="Q96CT2-2"/>
</dbReference>
<dbReference type="TopDownProteomics" id="Q96CT2-2">
    <molecule id="Q96CT2-2"/>
</dbReference>
<dbReference type="Antibodypedia" id="27362">
    <property type="antibodies" value="87 antibodies from 24 providers"/>
</dbReference>
<dbReference type="DNASU" id="114818"/>
<dbReference type="Ensembl" id="ENST00000486442.6">
    <molecule id="Q96CT2-1"/>
    <property type="protein sequence ID" value="ENSP00000420659.1"/>
    <property type="gene ID" value="ENSG00000119771.15"/>
</dbReference>
<dbReference type="GeneID" id="114818"/>
<dbReference type="KEGG" id="hsa:114818"/>
<dbReference type="MANE-Select" id="ENST00000486442.6">
    <property type="protein sequence ID" value="ENSP00000420659.1"/>
    <property type="RefSeq nucleotide sequence ID" value="NM_052920.2"/>
    <property type="RefSeq protein sequence ID" value="NP_443152.1"/>
</dbReference>
<dbReference type="UCSC" id="uc010ykg.3">
    <molecule id="Q96CT2-1"/>
    <property type="organism name" value="human"/>
</dbReference>
<dbReference type="AGR" id="HGNC:29404"/>
<dbReference type="CTD" id="114818"/>
<dbReference type="DisGeNET" id="114818"/>
<dbReference type="GeneCards" id="KLHL29"/>
<dbReference type="HGNC" id="HGNC:29404">
    <property type="gene designation" value="KLHL29"/>
</dbReference>
<dbReference type="HPA" id="ENSG00000119771">
    <property type="expression patterns" value="Low tissue specificity"/>
</dbReference>
<dbReference type="neXtProt" id="NX_Q96CT2"/>
<dbReference type="OpenTargets" id="ENSG00000119771"/>
<dbReference type="PharmGKB" id="PA162393486"/>
<dbReference type="VEuPathDB" id="HostDB:ENSG00000119771"/>
<dbReference type="eggNOG" id="KOG1721">
    <property type="taxonomic scope" value="Eukaryota"/>
</dbReference>
<dbReference type="eggNOG" id="KOG4441">
    <property type="taxonomic scope" value="Eukaryota"/>
</dbReference>
<dbReference type="GeneTree" id="ENSGT00940000158824"/>
<dbReference type="HOGENOM" id="CLU_004253_4_0_1"/>
<dbReference type="InParanoid" id="Q96CT2"/>
<dbReference type="OMA" id="SHSYGMN"/>
<dbReference type="OrthoDB" id="45365at2759"/>
<dbReference type="PAN-GO" id="Q96CT2">
    <property type="GO annotations" value="0 GO annotations based on evolutionary models"/>
</dbReference>
<dbReference type="PhylomeDB" id="Q96CT2"/>
<dbReference type="TreeFam" id="TF351654"/>
<dbReference type="PathwayCommons" id="Q96CT2"/>
<dbReference type="SignaLink" id="Q96CT2"/>
<dbReference type="BioGRID-ORCS" id="114818">
    <property type="hits" value="7 hits in 1190 CRISPR screens"/>
</dbReference>
<dbReference type="ChiTaRS" id="KLHL29">
    <property type="organism name" value="human"/>
</dbReference>
<dbReference type="GenomeRNAi" id="114818"/>
<dbReference type="Pharos" id="Q96CT2">
    <property type="development level" value="Tbio"/>
</dbReference>
<dbReference type="PRO" id="PR:Q96CT2"/>
<dbReference type="Proteomes" id="UP000005640">
    <property type="component" value="Chromosome 2"/>
</dbReference>
<dbReference type="RNAct" id="Q96CT2">
    <property type="molecule type" value="protein"/>
</dbReference>
<dbReference type="Bgee" id="ENSG00000119771">
    <property type="expression patterns" value="Expressed in tibia and 171 other cell types or tissues"/>
</dbReference>
<dbReference type="ExpressionAtlas" id="Q96CT2">
    <property type="expression patterns" value="baseline and differential"/>
</dbReference>
<dbReference type="GO" id="GO:0031463">
    <property type="term" value="C:Cul3-RING ubiquitin ligase complex"/>
    <property type="evidence" value="ECO:0000318"/>
    <property type="project" value="GO_Central"/>
</dbReference>
<dbReference type="GO" id="GO:0005737">
    <property type="term" value="C:cytoplasm"/>
    <property type="evidence" value="ECO:0000318"/>
    <property type="project" value="GO_Central"/>
</dbReference>
<dbReference type="GO" id="GO:1990756">
    <property type="term" value="F:ubiquitin-like ligase-substrate adaptor activity"/>
    <property type="evidence" value="ECO:0000318"/>
    <property type="project" value="GO_Central"/>
</dbReference>
<dbReference type="GO" id="GO:0043161">
    <property type="term" value="P:proteasome-mediated ubiquitin-dependent protein catabolic process"/>
    <property type="evidence" value="ECO:0000318"/>
    <property type="project" value="GO_Central"/>
</dbReference>
<dbReference type="CDD" id="cd18468">
    <property type="entry name" value="BACK_KLHL29_KBTBD9"/>
    <property type="match status" value="1"/>
</dbReference>
<dbReference type="FunFam" id="1.25.40.420:FF:000001">
    <property type="entry name" value="Kelch-like family member 12"/>
    <property type="match status" value="1"/>
</dbReference>
<dbReference type="Gene3D" id="1.25.40.420">
    <property type="match status" value="1"/>
</dbReference>
<dbReference type="Gene3D" id="2.120.10.80">
    <property type="entry name" value="Kelch-type beta propeller"/>
    <property type="match status" value="2"/>
</dbReference>
<dbReference type="Gene3D" id="3.30.710.10">
    <property type="entry name" value="Potassium Channel Kv1.1, Chain A"/>
    <property type="match status" value="1"/>
</dbReference>
<dbReference type="InterPro" id="IPR011705">
    <property type="entry name" value="BACK"/>
</dbReference>
<dbReference type="InterPro" id="IPR000210">
    <property type="entry name" value="BTB/POZ_dom"/>
</dbReference>
<dbReference type="InterPro" id="IPR015915">
    <property type="entry name" value="Kelch-typ_b-propeller"/>
</dbReference>
<dbReference type="InterPro" id="IPR006652">
    <property type="entry name" value="Kelch_1"/>
</dbReference>
<dbReference type="InterPro" id="IPR011333">
    <property type="entry name" value="SKP1/BTB/POZ_sf"/>
</dbReference>
<dbReference type="PANTHER" id="PTHR45632:SF5">
    <property type="entry name" value="KELCH-LIKE PROTEIN 22"/>
    <property type="match status" value="1"/>
</dbReference>
<dbReference type="PANTHER" id="PTHR45632">
    <property type="entry name" value="LD33804P"/>
    <property type="match status" value="1"/>
</dbReference>
<dbReference type="Pfam" id="PF07707">
    <property type="entry name" value="BACK"/>
    <property type="match status" value="1"/>
</dbReference>
<dbReference type="Pfam" id="PF00651">
    <property type="entry name" value="BTB"/>
    <property type="match status" value="1"/>
</dbReference>
<dbReference type="Pfam" id="PF01344">
    <property type="entry name" value="Kelch_1"/>
    <property type="match status" value="1"/>
</dbReference>
<dbReference type="Pfam" id="PF24681">
    <property type="entry name" value="Kelch_KLHDC2_KLHL20_DRC7"/>
    <property type="match status" value="1"/>
</dbReference>
<dbReference type="SMART" id="SM00875">
    <property type="entry name" value="BACK"/>
    <property type="match status" value="1"/>
</dbReference>
<dbReference type="SMART" id="SM00225">
    <property type="entry name" value="BTB"/>
    <property type="match status" value="1"/>
</dbReference>
<dbReference type="SMART" id="SM00612">
    <property type="entry name" value="Kelch"/>
    <property type="match status" value="6"/>
</dbReference>
<dbReference type="SUPFAM" id="SSF117281">
    <property type="entry name" value="Kelch motif"/>
    <property type="match status" value="1"/>
</dbReference>
<dbReference type="SUPFAM" id="SSF54695">
    <property type="entry name" value="POZ domain"/>
    <property type="match status" value="1"/>
</dbReference>
<dbReference type="PROSITE" id="PS50097">
    <property type="entry name" value="BTB"/>
    <property type="match status" value="1"/>
</dbReference>
<proteinExistence type="evidence at protein level"/>
<reference key="1">
    <citation type="journal article" date="2007" name="BMC Genomics">
        <title>The full-ORF clone resource of the German cDNA consortium.</title>
        <authorList>
            <person name="Bechtel S."/>
            <person name="Rosenfelder H."/>
            <person name="Duda A."/>
            <person name="Schmidt C.P."/>
            <person name="Ernst U."/>
            <person name="Wellenreuther R."/>
            <person name="Mehrle A."/>
            <person name="Schuster C."/>
            <person name="Bahr A."/>
            <person name="Bloecker H."/>
            <person name="Heubner D."/>
            <person name="Hoerlein A."/>
            <person name="Michel G."/>
            <person name="Wedler H."/>
            <person name="Koehrer K."/>
            <person name="Ottenwaelder B."/>
            <person name="Poustka A."/>
            <person name="Wiemann S."/>
            <person name="Schupp I."/>
        </authorList>
    </citation>
    <scope>NUCLEOTIDE SEQUENCE [LARGE SCALE MRNA] OF 82-875 (ISOFORM 2)</scope>
    <source>
        <tissue>Melanoma</tissue>
    </source>
</reference>
<reference key="2">
    <citation type="journal article" date="2004" name="Genome Res.">
        <title>The status, quality, and expansion of the NIH full-length cDNA project: the Mammalian Gene Collection (MGC).</title>
        <authorList>
            <consortium name="The MGC Project Team"/>
        </authorList>
    </citation>
    <scope>NUCLEOTIDE SEQUENCE [LARGE SCALE MRNA] OF 162-875 (ISOFORM 2)</scope>
    <scope>NUCLEOTIDE SEQUENCE [LARGE SCALE MRNA] OF 181-875 (ISOFORM 1)</scope>
    <source>
        <tissue>Placenta</tissue>
    </source>
</reference>
<reference key="3">
    <citation type="journal article" date="2001" name="DNA Res.">
        <title>Prediction of the coding sequences of unidentified human genes. XXI. The complete sequences of 60 new cDNA clones from brain which code for large proteins.</title>
        <authorList>
            <person name="Nagase T."/>
            <person name="Kikuno R."/>
            <person name="Ohara O."/>
        </authorList>
    </citation>
    <scope>NUCLEOTIDE SEQUENCE [LARGE SCALE MRNA] OF 360-875 (ISOFORM 1)</scope>
    <source>
        <tissue>Brain</tissue>
    </source>
</reference>
<comment type="interaction">
    <interactant intactId="EBI-6426370">
        <id>Q96CT2</id>
    </interactant>
    <interactant intactId="EBI-744342">
        <id>Q8IVD9</id>
        <label>NUDCD3</label>
    </interactant>
    <organismsDiffer>false</organismsDiffer>
    <experiments>3</experiments>
</comment>
<comment type="alternative products">
    <event type="alternative splicing"/>
    <isoform>
        <id>Q96CT2-1</id>
        <name>1</name>
        <sequence type="displayed"/>
    </isoform>
    <isoform>
        <id>Q96CT2-2</id>
        <name>2</name>
        <sequence type="described" ref="VSP_010403"/>
    </isoform>
</comment>
<comment type="caution">
    <text evidence="5">Although the complete sequence is not known with certainty, sequence shown here appears to be the most probable in accordance with the mouse sequence ortholog.</text>
</comment>
<comment type="sequence caution" evidence="5">
    <conflict type="erroneous initiation">
        <sequence resource="EMBL-CDS" id="AAH13982"/>
    </conflict>
    <text>Extended N-terminus.</text>
</comment>
<comment type="sequence caution" evidence="5">
    <conflict type="erroneous initiation">
        <sequence resource="EMBL-CDS" id="AAH15667"/>
    </conflict>
    <text>Truncated N-terminus.</text>
</comment>
<comment type="sequence caution" evidence="5">
    <conflict type="miscellaneous discrepancy">
        <sequence resource="EMBL-CDS" id="BAB67814"/>
    </conflict>
    <text>Intron retention.</text>
</comment>
<comment type="sequence caution" evidence="5">
    <conflict type="erroneous initiation">
        <sequence resource="EMBL-CDS" id="CAD39171"/>
    </conflict>
    <text>Truncated N-terminus.</text>
</comment>
<feature type="chain" id="PRO_0000119086" description="Kelch-like protein 29">
    <location>
        <begin position="1"/>
        <end position="875"/>
    </location>
</feature>
<feature type="domain" description="BTB" evidence="1">
    <location>
        <begin position="329"/>
        <end position="401"/>
    </location>
</feature>
<feature type="repeat" description="Kelch 1">
    <location>
        <begin position="585"/>
        <end position="635"/>
    </location>
</feature>
<feature type="repeat" description="Kelch 2">
    <location>
        <begin position="637"/>
        <end position="683"/>
    </location>
</feature>
<feature type="repeat" description="Kelch 3">
    <location>
        <begin position="684"/>
        <end position="730"/>
    </location>
</feature>
<feature type="repeat" description="Kelch 4">
    <location>
        <begin position="732"/>
        <end position="778"/>
    </location>
</feature>
<feature type="repeat" description="Kelch 5">
    <location>
        <begin position="779"/>
        <end position="821"/>
    </location>
</feature>
<feature type="repeat" description="Kelch 6">
    <location>
        <begin position="822"/>
        <end position="870"/>
    </location>
</feature>
<feature type="region of interest" description="Disordered" evidence="2">
    <location>
        <begin position="115"/>
        <end position="145"/>
    </location>
</feature>
<feature type="region of interest" description="Disordered" evidence="2">
    <location>
        <begin position="248"/>
        <end position="291"/>
    </location>
</feature>
<feature type="compositionally biased region" description="Polar residues" evidence="2">
    <location>
        <begin position="115"/>
        <end position="126"/>
    </location>
</feature>
<feature type="compositionally biased region" description="Basic and acidic residues" evidence="2">
    <location>
        <begin position="131"/>
        <end position="140"/>
    </location>
</feature>
<feature type="splice variant" id="VSP_010403" description="In isoform 2." evidence="3 4">
    <location>
        <begin position="703"/>
        <end position="875"/>
    </location>
</feature>
<feature type="sequence conflict" description="In Ref. 1; CAD39171." evidence="5" ref="1">
    <original>P</original>
    <variation>R</variation>
    <location>
        <position position="312"/>
    </location>
</feature>
<sequence length="875" mass="94228">MSRHHSRFERDYRVGWDRREWSVNGTHGTTSICSVTSGAGGGTASSLSVRPGLLPLPVVPSRLPTPATAPAPCTTGSSEAITSLVASSASAVTTKAPGISKGDSQSQGLATSIRWGQTPINQSTPWDTDEPPSKQMRESDNPGTGPWVTTVAAGNQPTLIAHSYGVAQPPTFSPAVNVQAPVIGVTPSLPPHVGPQLPLMPGHYSLPQPPSQPLSSVVVNMPAQALYASPQPLAVSTLPGVGQVARPGPTAVGNGHMAGPLLPPPPPAQPSATLPSGAPATNGPPTTDSAHGLQMLRTIGVGKYEFTDPGHPREMLKELNQQRRAKAFTDLKIVVEGREFEVHQNVLASCSLYFKDLIQRSVQDSGQGGREKLELVLSNLQADVLELLLEFVYTGSLVIDSANAKTLLEAASKFQFHTFCKVCVSFLEKQLTASNCLGVLAMAEAMQCSELYHMAKAFALQIFPEVAAQEEILSISKDDFIAYVSNDSLNTKAEELVYETVIKWIKKDPATRTQYAAELLAVVRLPFIHPSYLLNVVDNEELIKSSEACRDLVNEAKRYHMLPHARQEMQTPRTRPRLSAGVAEVIVLVGGRQMVGMTQRSLVAVTCWNPQNNKWYPLASLPFYDREFFSVVSAGDNIYLSGGMESGVTLADVWCYMSLLDNWNLVSRMTVPRCRHNSLVYDGKIYTLGGLGVAGNVDHVERYDTITNQWEAVAPLPKAVHSAAATVCGGKIYVFGGVNEAGRAAGVLQSYVPQTNTWSFIESPMIDNKYAPAVTLNGFVFILGGAYARATTIYDPEKGNIKAGPNMNHSRQFCSAVVLDGKIYATGGIVSSEGPALGNMEAYEPTTNTWTLLPHMPCPVFRHGCVVIKKYIQSG</sequence>